<accession>Q87KP5</accession>
<comment type="function">
    <text evidence="1">Cell wall formation.</text>
</comment>
<comment type="catalytic activity">
    <reaction evidence="1">
        <text>UDP-N-acetyl-alpha-D-muramate + NADP(+) = UDP-N-acetyl-3-O-(1-carboxyvinyl)-alpha-D-glucosamine + NADPH + H(+)</text>
        <dbReference type="Rhea" id="RHEA:12248"/>
        <dbReference type="ChEBI" id="CHEBI:15378"/>
        <dbReference type="ChEBI" id="CHEBI:57783"/>
        <dbReference type="ChEBI" id="CHEBI:58349"/>
        <dbReference type="ChEBI" id="CHEBI:68483"/>
        <dbReference type="ChEBI" id="CHEBI:70757"/>
        <dbReference type="EC" id="1.3.1.98"/>
    </reaction>
</comment>
<comment type="cofactor">
    <cofactor evidence="1">
        <name>FAD</name>
        <dbReference type="ChEBI" id="CHEBI:57692"/>
    </cofactor>
</comment>
<comment type="pathway">
    <text evidence="1">Cell wall biogenesis; peptidoglycan biosynthesis.</text>
</comment>
<comment type="subcellular location">
    <subcellularLocation>
        <location evidence="1">Cytoplasm</location>
    </subcellularLocation>
</comment>
<comment type="similarity">
    <text evidence="1">Belongs to the MurB family.</text>
</comment>
<dbReference type="EC" id="1.3.1.98" evidence="1"/>
<dbReference type="EMBL" id="BA000031">
    <property type="protein sequence ID" value="BAC61195.1"/>
    <property type="molecule type" value="Genomic_DNA"/>
</dbReference>
<dbReference type="RefSeq" id="NP_799311.1">
    <property type="nucleotide sequence ID" value="NC_004603.1"/>
</dbReference>
<dbReference type="RefSeq" id="WP_005458754.1">
    <property type="nucleotide sequence ID" value="NC_004603.1"/>
</dbReference>
<dbReference type="SMR" id="Q87KP5"/>
<dbReference type="GeneID" id="1190511"/>
<dbReference type="KEGG" id="vpa:VP2932"/>
<dbReference type="PATRIC" id="fig|223926.6.peg.2821"/>
<dbReference type="eggNOG" id="COG0812">
    <property type="taxonomic scope" value="Bacteria"/>
</dbReference>
<dbReference type="HOGENOM" id="CLU_035304_0_0_6"/>
<dbReference type="UniPathway" id="UPA00219"/>
<dbReference type="Proteomes" id="UP000002493">
    <property type="component" value="Chromosome 1"/>
</dbReference>
<dbReference type="GO" id="GO:0005829">
    <property type="term" value="C:cytosol"/>
    <property type="evidence" value="ECO:0007669"/>
    <property type="project" value="TreeGrafter"/>
</dbReference>
<dbReference type="GO" id="GO:0071949">
    <property type="term" value="F:FAD binding"/>
    <property type="evidence" value="ECO:0007669"/>
    <property type="project" value="InterPro"/>
</dbReference>
<dbReference type="GO" id="GO:0008762">
    <property type="term" value="F:UDP-N-acetylmuramate dehydrogenase activity"/>
    <property type="evidence" value="ECO:0007669"/>
    <property type="project" value="UniProtKB-UniRule"/>
</dbReference>
<dbReference type="GO" id="GO:0051301">
    <property type="term" value="P:cell division"/>
    <property type="evidence" value="ECO:0007669"/>
    <property type="project" value="UniProtKB-KW"/>
</dbReference>
<dbReference type="GO" id="GO:0071555">
    <property type="term" value="P:cell wall organization"/>
    <property type="evidence" value="ECO:0007669"/>
    <property type="project" value="UniProtKB-KW"/>
</dbReference>
<dbReference type="GO" id="GO:0009252">
    <property type="term" value="P:peptidoglycan biosynthetic process"/>
    <property type="evidence" value="ECO:0007669"/>
    <property type="project" value="UniProtKB-UniRule"/>
</dbReference>
<dbReference type="GO" id="GO:0008360">
    <property type="term" value="P:regulation of cell shape"/>
    <property type="evidence" value="ECO:0007669"/>
    <property type="project" value="UniProtKB-KW"/>
</dbReference>
<dbReference type="Gene3D" id="3.30.465.10">
    <property type="match status" value="1"/>
</dbReference>
<dbReference type="Gene3D" id="3.90.78.10">
    <property type="entry name" value="UDP-N-acetylenolpyruvoylglucosamine reductase, C-terminal domain"/>
    <property type="match status" value="1"/>
</dbReference>
<dbReference type="Gene3D" id="3.30.43.10">
    <property type="entry name" value="Uridine Diphospho-n-acetylenolpyruvylglucosamine Reductase, domain 2"/>
    <property type="match status" value="1"/>
</dbReference>
<dbReference type="HAMAP" id="MF_00037">
    <property type="entry name" value="MurB"/>
    <property type="match status" value="1"/>
</dbReference>
<dbReference type="InterPro" id="IPR016166">
    <property type="entry name" value="FAD-bd_PCMH"/>
</dbReference>
<dbReference type="InterPro" id="IPR036318">
    <property type="entry name" value="FAD-bd_PCMH-like_sf"/>
</dbReference>
<dbReference type="InterPro" id="IPR016167">
    <property type="entry name" value="FAD-bd_PCMH_sub1"/>
</dbReference>
<dbReference type="InterPro" id="IPR016169">
    <property type="entry name" value="FAD-bd_PCMH_sub2"/>
</dbReference>
<dbReference type="InterPro" id="IPR003170">
    <property type="entry name" value="MurB"/>
</dbReference>
<dbReference type="InterPro" id="IPR011601">
    <property type="entry name" value="MurB_C"/>
</dbReference>
<dbReference type="InterPro" id="IPR036635">
    <property type="entry name" value="MurB_C_sf"/>
</dbReference>
<dbReference type="InterPro" id="IPR006094">
    <property type="entry name" value="Oxid_FAD_bind_N"/>
</dbReference>
<dbReference type="NCBIfam" id="TIGR00179">
    <property type="entry name" value="murB"/>
    <property type="match status" value="1"/>
</dbReference>
<dbReference type="NCBIfam" id="NF000755">
    <property type="entry name" value="PRK00046.1"/>
    <property type="match status" value="1"/>
</dbReference>
<dbReference type="PANTHER" id="PTHR21071">
    <property type="entry name" value="UDP-N-ACETYLENOLPYRUVOYLGLUCOSAMINE REDUCTASE"/>
    <property type="match status" value="1"/>
</dbReference>
<dbReference type="PANTHER" id="PTHR21071:SF4">
    <property type="entry name" value="UDP-N-ACETYLENOLPYRUVOYLGLUCOSAMINE REDUCTASE"/>
    <property type="match status" value="1"/>
</dbReference>
<dbReference type="Pfam" id="PF01565">
    <property type="entry name" value="FAD_binding_4"/>
    <property type="match status" value="1"/>
</dbReference>
<dbReference type="Pfam" id="PF02873">
    <property type="entry name" value="MurB_C"/>
    <property type="match status" value="1"/>
</dbReference>
<dbReference type="SUPFAM" id="SSF56176">
    <property type="entry name" value="FAD-binding/transporter-associated domain-like"/>
    <property type="match status" value="1"/>
</dbReference>
<dbReference type="SUPFAM" id="SSF56194">
    <property type="entry name" value="Uridine diphospho-N-Acetylenolpyruvylglucosamine reductase, MurB, C-terminal domain"/>
    <property type="match status" value="1"/>
</dbReference>
<dbReference type="PROSITE" id="PS51387">
    <property type="entry name" value="FAD_PCMH"/>
    <property type="match status" value="1"/>
</dbReference>
<sequence length="347" mass="38448">MQIKEHASLKAFHTFGIEQTCSYLAIVDSIDDVISLYQNPAFQSLPKLFLGKGSNVLFTEHFDGLVIVNRLLGKSVSETHEDYLLHVQGGEDWPSLVAWCVAQGMGGIENLALIPGCAGSAPIQNIGAYGVELKDLCSYVDVLDLTTLKTRRMSAEDCEFGYRDSVFKHDLYEKCFVTAIGLKLPKRWTPKNQYGPLQNIPENELSPNAIFERVCQVRMEKLPDPAKVGNAGSFFKNPVISQDHYDQLVRKHSDMVAYPANEGMKVAAGWLIDQCGLKGISVNGAQVNPLQALVLTNVDNCSADDVVALASLVKRAVWDKYQIELEHEVRFMNRQGETNLAKIEAAQ</sequence>
<reference key="1">
    <citation type="journal article" date="2003" name="Lancet">
        <title>Genome sequence of Vibrio parahaemolyticus: a pathogenic mechanism distinct from that of V. cholerae.</title>
        <authorList>
            <person name="Makino K."/>
            <person name="Oshima K."/>
            <person name="Kurokawa K."/>
            <person name="Yokoyama K."/>
            <person name="Uda T."/>
            <person name="Tagomori K."/>
            <person name="Iijima Y."/>
            <person name="Najima M."/>
            <person name="Nakano M."/>
            <person name="Yamashita A."/>
            <person name="Kubota Y."/>
            <person name="Kimura S."/>
            <person name="Yasunaga T."/>
            <person name="Honda T."/>
            <person name="Shinagawa H."/>
            <person name="Hattori M."/>
            <person name="Iida T."/>
        </authorList>
    </citation>
    <scope>NUCLEOTIDE SEQUENCE [LARGE SCALE GENOMIC DNA]</scope>
    <source>
        <strain>RIMD 2210633</strain>
    </source>
</reference>
<protein>
    <recommendedName>
        <fullName evidence="1">UDP-N-acetylenolpyruvoylglucosamine reductase</fullName>
        <ecNumber evidence="1">1.3.1.98</ecNumber>
    </recommendedName>
    <alternativeName>
        <fullName evidence="1">UDP-N-acetylmuramate dehydrogenase</fullName>
    </alternativeName>
</protein>
<organism>
    <name type="scientific">Vibrio parahaemolyticus serotype O3:K6 (strain RIMD 2210633)</name>
    <dbReference type="NCBI Taxonomy" id="223926"/>
    <lineage>
        <taxon>Bacteria</taxon>
        <taxon>Pseudomonadati</taxon>
        <taxon>Pseudomonadota</taxon>
        <taxon>Gammaproteobacteria</taxon>
        <taxon>Vibrionales</taxon>
        <taxon>Vibrionaceae</taxon>
        <taxon>Vibrio</taxon>
    </lineage>
</organism>
<feature type="chain" id="PRO_0000179287" description="UDP-N-acetylenolpyruvoylglucosamine reductase">
    <location>
        <begin position="1"/>
        <end position="347"/>
    </location>
</feature>
<feature type="domain" description="FAD-binding PCMH-type" evidence="1">
    <location>
        <begin position="15"/>
        <end position="187"/>
    </location>
</feature>
<feature type="active site" evidence="1">
    <location>
        <position position="163"/>
    </location>
</feature>
<feature type="active site" description="Proton donor" evidence="1">
    <location>
        <position position="233"/>
    </location>
</feature>
<feature type="active site" evidence="1">
    <location>
        <position position="328"/>
    </location>
</feature>
<name>MURB_VIBPA</name>
<evidence type="ECO:0000255" key="1">
    <source>
        <dbReference type="HAMAP-Rule" id="MF_00037"/>
    </source>
</evidence>
<keyword id="KW-0131">Cell cycle</keyword>
<keyword id="KW-0132">Cell division</keyword>
<keyword id="KW-0133">Cell shape</keyword>
<keyword id="KW-0961">Cell wall biogenesis/degradation</keyword>
<keyword id="KW-0963">Cytoplasm</keyword>
<keyword id="KW-0274">FAD</keyword>
<keyword id="KW-0285">Flavoprotein</keyword>
<keyword id="KW-0521">NADP</keyword>
<keyword id="KW-0560">Oxidoreductase</keyword>
<keyword id="KW-0573">Peptidoglycan synthesis</keyword>
<gene>
    <name evidence="1" type="primary">murB</name>
    <name type="ordered locus">VP2932</name>
</gene>
<proteinExistence type="inferred from homology"/>